<dbReference type="EC" id="2.8.1.8" evidence="1"/>
<dbReference type="EMBL" id="AL009126">
    <property type="protein sequence ID" value="CAB15223.2"/>
    <property type="molecule type" value="Genomic_DNA"/>
</dbReference>
<dbReference type="PIR" id="D70023">
    <property type="entry name" value="D70023"/>
</dbReference>
<dbReference type="RefSeq" id="NP_391113.2">
    <property type="nucleotide sequence ID" value="NC_000964.3"/>
</dbReference>
<dbReference type="RefSeq" id="WP_003222888.1">
    <property type="nucleotide sequence ID" value="NZ_OZ025638.1"/>
</dbReference>
<dbReference type="SMR" id="O32129"/>
<dbReference type="FunCoup" id="O32129">
    <property type="interactions" value="756"/>
</dbReference>
<dbReference type="STRING" id="224308.BSU32330"/>
<dbReference type="jPOST" id="O32129"/>
<dbReference type="PaxDb" id="224308-BSU32330"/>
<dbReference type="DNASU" id="938861"/>
<dbReference type="EnsemblBacteria" id="CAB15223">
    <property type="protein sequence ID" value="CAB15223"/>
    <property type="gene ID" value="BSU_32330"/>
</dbReference>
<dbReference type="GeneID" id="86872229"/>
<dbReference type="GeneID" id="938861"/>
<dbReference type="KEGG" id="bsu:BSU32330"/>
<dbReference type="PATRIC" id="fig|224308.179.peg.3500"/>
<dbReference type="eggNOG" id="COG0320">
    <property type="taxonomic scope" value="Bacteria"/>
</dbReference>
<dbReference type="InParanoid" id="O32129"/>
<dbReference type="OrthoDB" id="9787898at2"/>
<dbReference type="PhylomeDB" id="O32129"/>
<dbReference type="BioCyc" id="BSUB:BSU32330-MONOMER"/>
<dbReference type="BioCyc" id="MetaCyc:BSU32330-MONOMER"/>
<dbReference type="SABIO-RK" id="O32129"/>
<dbReference type="PRO" id="PR:O32129"/>
<dbReference type="Proteomes" id="UP000001570">
    <property type="component" value="Chromosome"/>
</dbReference>
<dbReference type="GO" id="GO:0005737">
    <property type="term" value="C:cytoplasm"/>
    <property type="evidence" value="ECO:0007669"/>
    <property type="project" value="UniProtKB-SubCell"/>
</dbReference>
<dbReference type="GO" id="GO:0051539">
    <property type="term" value="F:4 iron, 4 sulfur cluster binding"/>
    <property type="evidence" value="ECO:0007669"/>
    <property type="project" value="UniProtKB-UniRule"/>
</dbReference>
<dbReference type="GO" id="GO:0016992">
    <property type="term" value="F:lipoate synthase activity"/>
    <property type="evidence" value="ECO:0000316"/>
    <property type="project" value="UniProtKB"/>
</dbReference>
<dbReference type="GO" id="GO:0046872">
    <property type="term" value="F:metal ion binding"/>
    <property type="evidence" value="ECO:0007669"/>
    <property type="project" value="UniProtKB-KW"/>
</dbReference>
<dbReference type="GO" id="GO:0009107">
    <property type="term" value="P:lipoate biosynthetic process"/>
    <property type="evidence" value="ECO:0000316"/>
    <property type="project" value="UniProtKB"/>
</dbReference>
<dbReference type="GO" id="GO:0009249">
    <property type="term" value="P:protein lipoylation"/>
    <property type="evidence" value="ECO:0000316"/>
    <property type="project" value="UniProtKB"/>
</dbReference>
<dbReference type="CDD" id="cd01335">
    <property type="entry name" value="Radical_SAM"/>
    <property type="match status" value="1"/>
</dbReference>
<dbReference type="FunFam" id="3.20.20.70:FF:000040">
    <property type="entry name" value="Lipoyl synthase"/>
    <property type="match status" value="1"/>
</dbReference>
<dbReference type="Gene3D" id="3.20.20.70">
    <property type="entry name" value="Aldolase class I"/>
    <property type="match status" value="1"/>
</dbReference>
<dbReference type="HAMAP" id="MF_00206">
    <property type="entry name" value="Lipoyl_synth"/>
    <property type="match status" value="1"/>
</dbReference>
<dbReference type="InterPro" id="IPR013785">
    <property type="entry name" value="Aldolase_TIM"/>
</dbReference>
<dbReference type="InterPro" id="IPR006638">
    <property type="entry name" value="Elp3/MiaA/NifB-like_rSAM"/>
</dbReference>
<dbReference type="InterPro" id="IPR031691">
    <property type="entry name" value="LIAS_N"/>
</dbReference>
<dbReference type="InterPro" id="IPR003698">
    <property type="entry name" value="Lipoyl_synth"/>
</dbReference>
<dbReference type="InterPro" id="IPR007197">
    <property type="entry name" value="rSAM"/>
</dbReference>
<dbReference type="NCBIfam" id="TIGR00510">
    <property type="entry name" value="lipA"/>
    <property type="match status" value="1"/>
</dbReference>
<dbReference type="NCBIfam" id="NF004019">
    <property type="entry name" value="PRK05481.1"/>
    <property type="match status" value="1"/>
</dbReference>
<dbReference type="NCBIfam" id="NF009544">
    <property type="entry name" value="PRK12928.1"/>
    <property type="match status" value="1"/>
</dbReference>
<dbReference type="PANTHER" id="PTHR10949">
    <property type="entry name" value="LIPOYL SYNTHASE"/>
    <property type="match status" value="1"/>
</dbReference>
<dbReference type="PANTHER" id="PTHR10949:SF0">
    <property type="entry name" value="LIPOYL SYNTHASE, MITOCHONDRIAL"/>
    <property type="match status" value="1"/>
</dbReference>
<dbReference type="Pfam" id="PF16881">
    <property type="entry name" value="LIAS_N"/>
    <property type="match status" value="1"/>
</dbReference>
<dbReference type="Pfam" id="PF04055">
    <property type="entry name" value="Radical_SAM"/>
    <property type="match status" value="1"/>
</dbReference>
<dbReference type="PIRSF" id="PIRSF005963">
    <property type="entry name" value="Lipoyl_synth"/>
    <property type="match status" value="1"/>
</dbReference>
<dbReference type="SFLD" id="SFLDF00271">
    <property type="entry name" value="lipoyl_synthase"/>
    <property type="match status" value="1"/>
</dbReference>
<dbReference type="SFLD" id="SFLDS00029">
    <property type="entry name" value="Radical_SAM"/>
    <property type="match status" value="1"/>
</dbReference>
<dbReference type="SMART" id="SM00729">
    <property type="entry name" value="Elp3"/>
    <property type="match status" value="1"/>
</dbReference>
<dbReference type="SUPFAM" id="SSF102114">
    <property type="entry name" value="Radical SAM enzymes"/>
    <property type="match status" value="1"/>
</dbReference>
<dbReference type="PROSITE" id="PS51918">
    <property type="entry name" value="RADICAL_SAM"/>
    <property type="match status" value="1"/>
</dbReference>
<keyword id="KW-0004">4Fe-4S</keyword>
<keyword id="KW-0963">Cytoplasm</keyword>
<keyword id="KW-0408">Iron</keyword>
<keyword id="KW-0411">Iron-sulfur</keyword>
<keyword id="KW-0479">Metal-binding</keyword>
<keyword id="KW-1185">Reference proteome</keyword>
<keyword id="KW-0949">S-adenosyl-L-methionine</keyword>
<keyword id="KW-0808">Transferase</keyword>
<comment type="function">
    <text evidence="1 3">Catalyzes the radical-mediated insertion of two sulfur atoms into the C-6 and C-8 positions of the octanoyl moiety bound to the lipoyl domains of lipoate-dependent enzymes, thereby converting the octanoylated domains into lipoylated derivatives.</text>
</comment>
<comment type="catalytic activity">
    <reaction evidence="1">
        <text>[[Fe-S] cluster scaffold protein carrying a second [4Fe-4S](2+) cluster] + N(6)-octanoyl-L-lysyl-[protein] + 2 oxidized [2Fe-2S]-[ferredoxin] + 2 S-adenosyl-L-methionine + 4 H(+) = [[Fe-S] cluster scaffold protein] + N(6)-[(R)-dihydrolipoyl]-L-lysyl-[protein] + 4 Fe(3+) + 2 hydrogen sulfide + 2 5'-deoxyadenosine + 2 L-methionine + 2 reduced [2Fe-2S]-[ferredoxin]</text>
        <dbReference type="Rhea" id="RHEA:16585"/>
        <dbReference type="Rhea" id="RHEA-COMP:9928"/>
        <dbReference type="Rhea" id="RHEA-COMP:10000"/>
        <dbReference type="Rhea" id="RHEA-COMP:10001"/>
        <dbReference type="Rhea" id="RHEA-COMP:10475"/>
        <dbReference type="Rhea" id="RHEA-COMP:14568"/>
        <dbReference type="Rhea" id="RHEA-COMP:14569"/>
        <dbReference type="ChEBI" id="CHEBI:15378"/>
        <dbReference type="ChEBI" id="CHEBI:17319"/>
        <dbReference type="ChEBI" id="CHEBI:29034"/>
        <dbReference type="ChEBI" id="CHEBI:29919"/>
        <dbReference type="ChEBI" id="CHEBI:33722"/>
        <dbReference type="ChEBI" id="CHEBI:33737"/>
        <dbReference type="ChEBI" id="CHEBI:33738"/>
        <dbReference type="ChEBI" id="CHEBI:57844"/>
        <dbReference type="ChEBI" id="CHEBI:59789"/>
        <dbReference type="ChEBI" id="CHEBI:78809"/>
        <dbReference type="ChEBI" id="CHEBI:83100"/>
        <dbReference type="EC" id="2.8.1.8"/>
    </reaction>
</comment>
<comment type="cofactor">
    <cofactor evidence="1">
        <name>[4Fe-4S] cluster</name>
        <dbReference type="ChEBI" id="CHEBI:49883"/>
    </cofactor>
    <text evidence="1">Binds 2 [4Fe-4S] clusters per subunit. One cluster is coordinated with 3 cysteines and an exchangeable S-adenosyl-L-methionine.</text>
</comment>
<comment type="pathway">
    <text evidence="1 3">Protein modification; protein lipoylation via endogenous pathway; protein N(6)-(lipoyl)lysine from octanoyl-[acyl-carrier-protein].</text>
</comment>
<comment type="subcellular location">
    <subcellularLocation>
        <location evidence="1">Cytoplasm</location>
    </subcellularLocation>
</comment>
<comment type="disruption phenotype">
    <text evidence="3">Disruption of this gene interrupts lipoate-dependent reactions, which strongly inhibits growth in minimal medium, impairing the generation of branched-chain fatty acids and leading to accumulation of copious amounts of straight-chain saturated fatty acids in B.subtilis membranes.</text>
</comment>
<comment type="similarity">
    <text evidence="1">Belongs to the radical SAM superfamily. Lipoyl synthase family.</text>
</comment>
<sequence>MAKKDEHLRKPEWLKIKLNTNENYTGLKKLMRENNLHTVCEEAKCPNIHECWAVRRTATFMILGSVCTRACRFCAVKTGLPTELDLQEPERVADSVALMNLKHAVITAVARDDQKDGGAGIFAETVRAIRRKSPFTTIEVLPSDMGGNYDNLKTLMDTRPDILNHNIETVRRLTPRVRARATYDRSLEFLRRAKEMQPDIPTKSSIMIGLGETKEEIIEVMDDLLANNVDIMAIGQYLQPTKKHLKVQKYYHPDEFAELKEIAMQKGFSHCEAGPLVRSSYHADEQVNEASKKRQAQA</sequence>
<proteinExistence type="evidence at protein level"/>
<reference key="1">
    <citation type="journal article" date="1997" name="Nature">
        <title>The complete genome sequence of the Gram-positive bacterium Bacillus subtilis.</title>
        <authorList>
            <person name="Kunst F."/>
            <person name="Ogasawara N."/>
            <person name="Moszer I."/>
            <person name="Albertini A.M."/>
            <person name="Alloni G."/>
            <person name="Azevedo V."/>
            <person name="Bertero M.G."/>
            <person name="Bessieres P."/>
            <person name="Bolotin A."/>
            <person name="Borchert S."/>
            <person name="Borriss R."/>
            <person name="Boursier L."/>
            <person name="Brans A."/>
            <person name="Braun M."/>
            <person name="Brignell S.C."/>
            <person name="Bron S."/>
            <person name="Brouillet S."/>
            <person name="Bruschi C.V."/>
            <person name="Caldwell B."/>
            <person name="Capuano V."/>
            <person name="Carter N.M."/>
            <person name="Choi S.-K."/>
            <person name="Codani J.-J."/>
            <person name="Connerton I.F."/>
            <person name="Cummings N.J."/>
            <person name="Daniel R.A."/>
            <person name="Denizot F."/>
            <person name="Devine K.M."/>
            <person name="Duesterhoeft A."/>
            <person name="Ehrlich S.D."/>
            <person name="Emmerson P.T."/>
            <person name="Entian K.-D."/>
            <person name="Errington J."/>
            <person name="Fabret C."/>
            <person name="Ferrari E."/>
            <person name="Foulger D."/>
            <person name="Fritz C."/>
            <person name="Fujita M."/>
            <person name="Fujita Y."/>
            <person name="Fuma S."/>
            <person name="Galizzi A."/>
            <person name="Galleron N."/>
            <person name="Ghim S.-Y."/>
            <person name="Glaser P."/>
            <person name="Goffeau A."/>
            <person name="Golightly E.J."/>
            <person name="Grandi G."/>
            <person name="Guiseppi G."/>
            <person name="Guy B.J."/>
            <person name="Haga K."/>
            <person name="Haiech J."/>
            <person name="Harwood C.R."/>
            <person name="Henaut A."/>
            <person name="Hilbert H."/>
            <person name="Holsappel S."/>
            <person name="Hosono S."/>
            <person name="Hullo M.-F."/>
            <person name="Itaya M."/>
            <person name="Jones L.-M."/>
            <person name="Joris B."/>
            <person name="Karamata D."/>
            <person name="Kasahara Y."/>
            <person name="Klaerr-Blanchard M."/>
            <person name="Klein C."/>
            <person name="Kobayashi Y."/>
            <person name="Koetter P."/>
            <person name="Koningstein G."/>
            <person name="Krogh S."/>
            <person name="Kumano M."/>
            <person name="Kurita K."/>
            <person name="Lapidus A."/>
            <person name="Lardinois S."/>
            <person name="Lauber J."/>
            <person name="Lazarevic V."/>
            <person name="Lee S.-M."/>
            <person name="Levine A."/>
            <person name="Liu H."/>
            <person name="Masuda S."/>
            <person name="Mauel C."/>
            <person name="Medigue C."/>
            <person name="Medina N."/>
            <person name="Mellado R.P."/>
            <person name="Mizuno M."/>
            <person name="Moestl D."/>
            <person name="Nakai S."/>
            <person name="Noback M."/>
            <person name="Noone D."/>
            <person name="O'Reilly M."/>
            <person name="Ogawa K."/>
            <person name="Ogiwara A."/>
            <person name="Oudega B."/>
            <person name="Park S.-H."/>
            <person name="Parro V."/>
            <person name="Pohl T.M."/>
            <person name="Portetelle D."/>
            <person name="Porwollik S."/>
            <person name="Prescott A.M."/>
            <person name="Presecan E."/>
            <person name="Pujic P."/>
            <person name="Purnelle B."/>
            <person name="Rapoport G."/>
            <person name="Rey M."/>
            <person name="Reynolds S."/>
            <person name="Rieger M."/>
            <person name="Rivolta C."/>
            <person name="Rocha E."/>
            <person name="Roche B."/>
            <person name="Rose M."/>
            <person name="Sadaie Y."/>
            <person name="Sato T."/>
            <person name="Scanlan E."/>
            <person name="Schleich S."/>
            <person name="Schroeter R."/>
            <person name="Scoffone F."/>
            <person name="Sekiguchi J."/>
            <person name="Sekowska A."/>
            <person name="Seror S.J."/>
            <person name="Serror P."/>
            <person name="Shin B.-S."/>
            <person name="Soldo B."/>
            <person name="Sorokin A."/>
            <person name="Tacconi E."/>
            <person name="Takagi T."/>
            <person name="Takahashi H."/>
            <person name="Takemaru K."/>
            <person name="Takeuchi M."/>
            <person name="Tamakoshi A."/>
            <person name="Tanaka T."/>
            <person name="Terpstra P."/>
            <person name="Tognoni A."/>
            <person name="Tosato V."/>
            <person name="Uchiyama S."/>
            <person name="Vandenbol M."/>
            <person name="Vannier F."/>
            <person name="Vassarotti A."/>
            <person name="Viari A."/>
            <person name="Wambutt R."/>
            <person name="Wedler E."/>
            <person name="Wedler H."/>
            <person name="Weitzenegger T."/>
            <person name="Winters P."/>
            <person name="Wipat A."/>
            <person name="Yamamoto H."/>
            <person name="Yamane K."/>
            <person name="Yasumoto K."/>
            <person name="Yata K."/>
            <person name="Yoshida K."/>
            <person name="Yoshikawa H.-F."/>
            <person name="Zumstein E."/>
            <person name="Yoshikawa H."/>
            <person name="Danchin A."/>
        </authorList>
    </citation>
    <scope>NUCLEOTIDE SEQUENCE [LARGE SCALE GENOMIC DNA]</scope>
    <source>
        <strain>168</strain>
    </source>
</reference>
<reference key="2">
    <citation type="journal article" date="2009" name="J. Bacteriol.">
        <title>A lipA (yutB) mutant, encoding lipoic acid synthase, provides insight into the interplay between branched-chain and unsaturated fatty acid biosynthesis in Bacillus subtilis.</title>
        <authorList>
            <person name="Martin N."/>
            <person name="Lombardia E."/>
            <person name="Altabe S.G."/>
            <person name="de Mendoza D."/>
            <person name="Mansilla M.C."/>
        </authorList>
    </citation>
    <scope>FUNCTION AS A LIPOYL SYNTHASE</scope>
    <scope>PATHWAY</scope>
    <scope>DISRUPTION PHENOTYPE</scope>
    <source>
        <strain>168 / JH642</strain>
    </source>
</reference>
<organism>
    <name type="scientific">Bacillus subtilis (strain 168)</name>
    <dbReference type="NCBI Taxonomy" id="224308"/>
    <lineage>
        <taxon>Bacteria</taxon>
        <taxon>Bacillati</taxon>
        <taxon>Bacillota</taxon>
        <taxon>Bacilli</taxon>
        <taxon>Bacillales</taxon>
        <taxon>Bacillaceae</taxon>
        <taxon>Bacillus</taxon>
    </lineage>
</organism>
<name>LIPA_BACSU</name>
<gene>
    <name evidence="1" type="primary">lipA</name>
    <name type="synonym">yutB</name>
    <name type="ordered locus">BSU32330</name>
</gene>
<feature type="chain" id="PRO_0000102288" description="Lipoyl synthase">
    <location>
        <begin position="1"/>
        <end position="298"/>
    </location>
</feature>
<feature type="domain" description="Radical SAM core" evidence="2">
    <location>
        <begin position="53"/>
        <end position="269"/>
    </location>
</feature>
<feature type="binding site" evidence="1">
    <location>
        <position position="40"/>
    </location>
    <ligand>
        <name>[4Fe-4S] cluster</name>
        <dbReference type="ChEBI" id="CHEBI:49883"/>
        <label>1</label>
    </ligand>
</feature>
<feature type="binding site" evidence="1">
    <location>
        <position position="45"/>
    </location>
    <ligand>
        <name>[4Fe-4S] cluster</name>
        <dbReference type="ChEBI" id="CHEBI:49883"/>
        <label>1</label>
    </ligand>
</feature>
<feature type="binding site" evidence="1">
    <location>
        <position position="51"/>
    </location>
    <ligand>
        <name>[4Fe-4S] cluster</name>
        <dbReference type="ChEBI" id="CHEBI:49883"/>
        <label>1</label>
    </ligand>
</feature>
<feature type="binding site" evidence="1">
    <location>
        <position position="67"/>
    </location>
    <ligand>
        <name>[4Fe-4S] cluster</name>
        <dbReference type="ChEBI" id="CHEBI:49883"/>
        <label>2</label>
        <note>4Fe-4S-S-AdoMet</note>
    </ligand>
</feature>
<feature type="binding site" evidence="1">
    <location>
        <position position="71"/>
    </location>
    <ligand>
        <name>[4Fe-4S] cluster</name>
        <dbReference type="ChEBI" id="CHEBI:49883"/>
        <label>2</label>
        <note>4Fe-4S-S-AdoMet</note>
    </ligand>
</feature>
<feature type="binding site" evidence="1">
    <location>
        <position position="74"/>
    </location>
    <ligand>
        <name>[4Fe-4S] cluster</name>
        <dbReference type="ChEBI" id="CHEBI:49883"/>
        <label>2</label>
        <note>4Fe-4S-S-AdoMet</note>
    </ligand>
</feature>
<feature type="binding site" evidence="1">
    <location>
        <position position="280"/>
    </location>
    <ligand>
        <name>[4Fe-4S] cluster</name>
        <dbReference type="ChEBI" id="CHEBI:49883"/>
        <label>1</label>
    </ligand>
</feature>
<accession>O32129</accession>
<protein>
    <recommendedName>
        <fullName evidence="1">Lipoyl synthase</fullName>
        <ecNumber evidence="1">2.8.1.8</ecNumber>
    </recommendedName>
    <alternativeName>
        <fullName evidence="1">Lip-syn</fullName>
        <shortName evidence="1">LS</shortName>
    </alternativeName>
    <alternativeName>
        <fullName evidence="1">Lipoate synthase</fullName>
    </alternativeName>
    <alternativeName>
        <fullName evidence="1">Lipoic acid synthase</fullName>
    </alternativeName>
    <alternativeName>
        <fullName evidence="1">Sulfur insertion protein LipA</fullName>
    </alternativeName>
</protein>
<evidence type="ECO:0000255" key="1">
    <source>
        <dbReference type="HAMAP-Rule" id="MF_00206"/>
    </source>
</evidence>
<evidence type="ECO:0000255" key="2">
    <source>
        <dbReference type="PROSITE-ProRule" id="PRU01266"/>
    </source>
</evidence>
<evidence type="ECO:0000269" key="3">
    <source>
    </source>
</evidence>